<sequence>MADNRIAGSLPTSSKWSFLPKSVSSHFKPSSNPRSSNPDIENAPPQNPNIHNPRNQSVSSKSTAYKNQMDSPNCRSQVSASRPRAISALKTRNEVEEEGASNPHVKVVVRIKPTKEYCWKVKKVSKVSYSVRDRHFTFDSVLDSNLNQDDVFQQIGVPLVRDALSGYNTSVLSYGQNGSGKTYTMWGPAGSMLEDPSPKGEQGLAPRIFQMLFSEIQREKIKSGGKEVNYQCRCSFLEIYNGQISDLIDQTQRNLKIKDDAKNGIYVENLTEEYVDSYEDVAQILMKGLSSRKVGATSTSFQSSRSHVILSFIVESWNKGASSRCFNTTRTSRINLVDLAGAGTNERDATKHCVEEEKFLKKSLSELGHVVNSLAENVHPGISDRSLHKTSCLTHLLQESLGGNSKLTILCNIFPSDKDTKRTMSTLRFGERAKAMGNKPMINEISEEDVNDLSDQIRLLKEELSKVKADACHSVGSKNDYFGAKNARESLNQLRVSLNRSLMLPKIDNDEEEITVDEDDFKELHLQIKSLRGSFNQKLKKFPVNRDSVNSSFVTAFGESELMDDDEICSEEVEVEENDFGESLEEHDSAATVCKSSEKSRIEEFVSENSISISPCRQSLILQEPIQSESPKFRDSLRKSIALSSSCLRNQNSLAKSIKSTCFAESQHIRSSLRGSKIFTGSTESLAASLRRGLDIIDNPMNPASNRCSVSLSSDNLTMQPPTDDRLPLSPLCPTCRICSSKLPSVVEGDGYHMEGVLEKQQELEKLCSEQAAKIEQLTRLVGQHKLQTEDETEKLMGASNGERLPSANENQLLSCITETYDVKQISDDDSKKTDFDIGEKEALLKEIEDLKKKLQTPVTMSTNELRSSLLARSFQLRSKNAEKDIEEERLRCTEMESEWISLTDEFRVEIETQRTRAEKAEAQLKQEKLSSEELEDALRRAVLGHARFVEHYTELQEKYNDLCSKHKATVEWITELKKAVAKAGKKGCGSRFAKSLASELSALRVERERERDLLKKENISLKIQLRNTAEAVHTAGEVLVRLREAEQSASAAEEKFNEVEEENEKLKKKMEKLKRRHKLEVVTIKKSLKQNTLPESALQPLHQRNSAIEEEGM</sequence>
<feature type="chain" id="PRO_0000437193" description="Kinesin-like protein KIN-12F">
    <location>
        <begin position="1"/>
        <end position="1114"/>
    </location>
</feature>
<feature type="domain" description="Kinesin motor" evidence="2">
    <location>
        <begin position="104"/>
        <end position="436"/>
    </location>
</feature>
<feature type="region of interest" description="Disordered" evidence="3">
    <location>
        <begin position="1"/>
        <end position="84"/>
    </location>
</feature>
<feature type="region of interest" description="Disordered" evidence="3">
    <location>
        <begin position="1092"/>
        <end position="1114"/>
    </location>
</feature>
<feature type="coiled-coil region" evidence="1">
    <location>
        <begin position="761"/>
        <end position="791"/>
    </location>
</feature>
<feature type="coiled-coil region" evidence="1">
    <location>
        <begin position="872"/>
        <end position="942"/>
    </location>
</feature>
<feature type="coiled-coil region" evidence="1">
    <location>
        <begin position="1038"/>
        <end position="1081"/>
    </location>
</feature>
<feature type="compositionally biased region" description="Polar residues" evidence="3">
    <location>
        <begin position="10"/>
        <end position="39"/>
    </location>
</feature>
<feature type="compositionally biased region" description="Polar residues" evidence="3">
    <location>
        <begin position="48"/>
        <end position="80"/>
    </location>
</feature>
<feature type="binding site" evidence="2">
    <location>
        <begin position="175"/>
        <end position="182"/>
    </location>
    <ligand>
        <name>ATP</name>
        <dbReference type="ChEBI" id="CHEBI:30616"/>
    </ligand>
</feature>
<comment type="similarity">
    <text evidence="4">Belongs to the TRAFAC class myosin-kinesin ATPase superfamily. Kinesin family. KIN-12 subfamily.</text>
</comment>
<comment type="sequence caution" evidence="5">
    <conflict type="erroneous gene model prediction">
        <sequence resource="EMBL-CDS" id="BAB01875"/>
    </conflict>
</comment>
<keyword id="KW-0067">ATP-binding</keyword>
<keyword id="KW-0175">Coiled coil</keyword>
<keyword id="KW-0493">Microtubule</keyword>
<keyword id="KW-0505">Motor protein</keyword>
<keyword id="KW-0547">Nucleotide-binding</keyword>
<keyword id="KW-1185">Reference proteome</keyword>
<evidence type="ECO:0000255" key="1"/>
<evidence type="ECO:0000255" key="2">
    <source>
        <dbReference type="PROSITE-ProRule" id="PRU00283"/>
    </source>
</evidence>
<evidence type="ECO:0000256" key="3">
    <source>
        <dbReference type="SAM" id="MobiDB-lite"/>
    </source>
</evidence>
<evidence type="ECO:0000303" key="4">
    <source>
    </source>
</evidence>
<evidence type="ECO:0000305" key="5"/>
<evidence type="ECO:0000312" key="6">
    <source>
        <dbReference type="Araport" id="AT3G20150"/>
    </source>
</evidence>
<evidence type="ECO:0000312" key="7">
    <source>
        <dbReference type="EMBL" id="BAB01875.1"/>
    </source>
</evidence>
<organism>
    <name type="scientific">Arabidopsis thaliana</name>
    <name type="common">Mouse-ear cress</name>
    <dbReference type="NCBI Taxonomy" id="3702"/>
    <lineage>
        <taxon>Eukaryota</taxon>
        <taxon>Viridiplantae</taxon>
        <taxon>Streptophyta</taxon>
        <taxon>Embryophyta</taxon>
        <taxon>Tracheophyta</taxon>
        <taxon>Spermatophyta</taxon>
        <taxon>Magnoliopsida</taxon>
        <taxon>eudicotyledons</taxon>
        <taxon>Gunneridae</taxon>
        <taxon>Pentapetalae</taxon>
        <taxon>rosids</taxon>
        <taxon>malvids</taxon>
        <taxon>Brassicales</taxon>
        <taxon>Brassicaceae</taxon>
        <taxon>Camelineae</taxon>
        <taxon>Arabidopsis</taxon>
    </lineage>
</organism>
<dbReference type="EMBL" id="AP000383">
    <property type="protein sequence ID" value="BAB01875.1"/>
    <property type="status" value="ALT_SEQ"/>
    <property type="molecule type" value="Genomic_DNA"/>
</dbReference>
<dbReference type="EMBL" id="CP002686">
    <property type="protein sequence ID" value="AEE76340.1"/>
    <property type="molecule type" value="Genomic_DNA"/>
</dbReference>
<dbReference type="RefSeq" id="NP_188650.2">
    <property type="nucleotide sequence ID" value="NM_112906.5"/>
</dbReference>
<dbReference type="SMR" id="F4JDI6"/>
<dbReference type="FunCoup" id="F4JDI6">
    <property type="interactions" value="289"/>
</dbReference>
<dbReference type="STRING" id="3702.F4JDI6"/>
<dbReference type="iPTMnet" id="F4JDI6"/>
<dbReference type="PaxDb" id="3702-AT3G20150.1"/>
<dbReference type="ProteomicsDB" id="237095"/>
<dbReference type="EnsemblPlants" id="AT3G20150.1">
    <property type="protein sequence ID" value="AT3G20150.1"/>
    <property type="gene ID" value="AT3G20150"/>
</dbReference>
<dbReference type="GeneID" id="821558"/>
<dbReference type="Gramene" id="AT3G20150.1">
    <property type="protein sequence ID" value="AT3G20150.1"/>
    <property type="gene ID" value="AT3G20150"/>
</dbReference>
<dbReference type="KEGG" id="ath:AT3G20150"/>
<dbReference type="Araport" id="AT3G20150"/>
<dbReference type="TAIR" id="AT3G20150"/>
<dbReference type="eggNOG" id="KOG4280">
    <property type="taxonomic scope" value="Eukaryota"/>
</dbReference>
<dbReference type="HOGENOM" id="CLU_009194_0_0_1"/>
<dbReference type="InParanoid" id="F4JDI6"/>
<dbReference type="OMA" id="AKADACH"/>
<dbReference type="PRO" id="PR:F4JDI6"/>
<dbReference type="Proteomes" id="UP000006548">
    <property type="component" value="Chromosome 3"/>
</dbReference>
<dbReference type="ExpressionAtlas" id="F4JDI6">
    <property type="expression patterns" value="baseline and differential"/>
</dbReference>
<dbReference type="GO" id="GO:0005874">
    <property type="term" value="C:microtubule"/>
    <property type="evidence" value="ECO:0007669"/>
    <property type="project" value="UniProtKB-KW"/>
</dbReference>
<dbReference type="GO" id="GO:0005524">
    <property type="term" value="F:ATP binding"/>
    <property type="evidence" value="ECO:0007669"/>
    <property type="project" value="UniProtKB-KW"/>
</dbReference>
<dbReference type="GO" id="GO:0008017">
    <property type="term" value="F:microtubule binding"/>
    <property type="evidence" value="ECO:0007669"/>
    <property type="project" value="InterPro"/>
</dbReference>
<dbReference type="GO" id="GO:0003777">
    <property type="term" value="F:microtubule motor activity"/>
    <property type="evidence" value="ECO:0007669"/>
    <property type="project" value="InterPro"/>
</dbReference>
<dbReference type="GO" id="GO:0007018">
    <property type="term" value="P:microtubule-based movement"/>
    <property type="evidence" value="ECO:0007669"/>
    <property type="project" value="InterPro"/>
</dbReference>
<dbReference type="CDD" id="cd01373">
    <property type="entry name" value="KISc_KLP2_like"/>
    <property type="match status" value="1"/>
</dbReference>
<dbReference type="FunFam" id="3.40.850.10:FF:000052">
    <property type="entry name" value="Kinesin-like protein KIN-12F"/>
    <property type="match status" value="1"/>
</dbReference>
<dbReference type="Gene3D" id="3.40.850.10">
    <property type="entry name" value="Kinesin motor domain"/>
    <property type="match status" value="1"/>
</dbReference>
<dbReference type="InterPro" id="IPR044986">
    <property type="entry name" value="KIF15/KIN-12"/>
</dbReference>
<dbReference type="InterPro" id="IPR001752">
    <property type="entry name" value="Kinesin_motor_dom"/>
</dbReference>
<dbReference type="InterPro" id="IPR036961">
    <property type="entry name" value="Kinesin_motor_dom_sf"/>
</dbReference>
<dbReference type="InterPro" id="IPR027417">
    <property type="entry name" value="P-loop_NTPase"/>
</dbReference>
<dbReference type="PANTHER" id="PTHR37739:SF16">
    <property type="entry name" value="KINESIN-LIKE PROTEIN"/>
    <property type="match status" value="1"/>
</dbReference>
<dbReference type="PANTHER" id="PTHR37739">
    <property type="entry name" value="KINESIN-LIKE PROTEIN KIN-12D"/>
    <property type="match status" value="1"/>
</dbReference>
<dbReference type="Pfam" id="PF00225">
    <property type="entry name" value="Kinesin"/>
    <property type="match status" value="1"/>
</dbReference>
<dbReference type="PRINTS" id="PR00380">
    <property type="entry name" value="KINESINHEAVY"/>
</dbReference>
<dbReference type="SMART" id="SM00129">
    <property type="entry name" value="KISc"/>
    <property type="match status" value="1"/>
</dbReference>
<dbReference type="SUPFAM" id="SSF52540">
    <property type="entry name" value="P-loop containing nucleoside triphosphate hydrolases"/>
    <property type="match status" value="1"/>
</dbReference>
<dbReference type="PROSITE" id="PS50067">
    <property type="entry name" value="KINESIN_MOTOR_2"/>
    <property type="match status" value="1"/>
</dbReference>
<accession>F4JDI6</accession>
<accession>Q9LJY3</accession>
<gene>
    <name evidence="5" type="primary">KIN12F</name>
    <name evidence="6" type="ordered locus">At3g20150</name>
    <name evidence="7" type="ORF">MAL21.18</name>
</gene>
<name>KN12F_ARATH</name>
<proteinExistence type="inferred from homology"/>
<reference key="1">
    <citation type="journal article" date="2000" name="DNA Res.">
        <title>Structural analysis of Arabidopsis thaliana chromosome 3. II. Sequence features of the 4,251,695 bp regions covered by 90 P1, TAC and BAC clones.</title>
        <authorList>
            <person name="Kaneko T."/>
            <person name="Katoh T."/>
            <person name="Sato S."/>
            <person name="Nakamura Y."/>
            <person name="Asamizu E."/>
            <person name="Tabata S."/>
        </authorList>
    </citation>
    <scope>NUCLEOTIDE SEQUENCE [LARGE SCALE GENOMIC DNA]</scope>
    <source>
        <strain>cv. Columbia</strain>
    </source>
</reference>
<reference key="2">
    <citation type="journal article" date="2017" name="Plant J.">
        <title>Araport11: a complete reannotation of the Arabidopsis thaliana reference genome.</title>
        <authorList>
            <person name="Cheng C.Y."/>
            <person name="Krishnakumar V."/>
            <person name="Chan A.P."/>
            <person name="Thibaud-Nissen F."/>
            <person name="Schobel S."/>
            <person name="Town C.D."/>
        </authorList>
    </citation>
    <scope>GENOME REANNOTATION</scope>
    <source>
        <strain>cv. Columbia</strain>
    </source>
</reference>
<reference key="3">
    <citation type="journal article" date="2001" name="BMC Genomics">
        <title>Kinesins in the Arabidopsis genome: a comparative analysis among eukaryotes.</title>
        <authorList>
            <person name="Reddy A.S."/>
            <person name="Day I.S."/>
        </authorList>
    </citation>
    <scope>GENE FAMILY</scope>
</reference>
<reference key="4">
    <citation type="journal article" date="2006" name="BMC Genomics">
        <title>Comprehensive comparative analysis of kinesins in photosynthetic eukaryotes.</title>
        <authorList>
            <person name="Richardson D.N."/>
            <person name="Simmons M.P."/>
            <person name="Reddy A.S."/>
        </authorList>
    </citation>
    <scope>GENE FAMILY</scope>
    <scope>NOMENCLATURE</scope>
</reference>
<reference key="5">
    <citation type="journal article" date="2012" name="Protoplasma">
        <title>Functions of the Arabidopsis kinesin superfamily of microtubule-based motor proteins.</title>
        <authorList>
            <person name="Zhu C."/>
            <person name="Dixit R."/>
        </authorList>
    </citation>
    <scope>REVIEW</scope>
</reference>
<protein>
    <recommendedName>
        <fullName evidence="5">Kinesin-like protein KIN-12F</fullName>
    </recommendedName>
</protein>